<gene>
    <name evidence="1" type="primary">gcvP</name>
    <name type="ordered locus">Rleg2_1891</name>
</gene>
<accession>B5ZQP8</accession>
<dbReference type="EC" id="1.4.4.2" evidence="1"/>
<dbReference type="EMBL" id="CP001191">
    <property type="protein sequence ID" value="ACI55176.1"/>
    <property type="molecule type" value="Genomic_DNA"/>
</dbReference>
<dbReference type="RefSeq" id="WP_012557779.1">
    <property type="nucleotide sequence ID" value="NC_011369.1"/>
</dbReference>
<dbReference type="SMR" id="B5ZQP8"/>
<dbReference type="STRING" id="395492.Rleg2_1891"/>
<dbReference type="KEGG" id="rlt:Rleg2_1891"/>
<dbReference type="eggNOG" id="COG0403">
    <property type="taxonomic scope" value="Bacteria"/>
</dbReference>
<dbReference type="eggNOG" id="COG1003">
    <property type="taxonomic scope" value="Bacteria"/>
</dbReference>
<dbReference type="HOGENOM" id="CLU_004620_3_2_5"/>
<dbReference type="Proteomes" id="UP000008330">
    <property type="component" value="Chromosome"/>
</dbReference>
<dbReference type="GO" id="GO:0005829">
    <property type="term" value="C:cytosol"/>
    <property type="evidence" value="ECO:0007669"/>
    <property type="project" value="TreeGrafter"/>
</dbReference>
<dbReference type="GO" id="GO:0005960">
    <property type="term" value="C:glycine cleavage complex"/>
    <property type="evidence" value="ECO:0007669"/>
    <property type="project" value="TreeGrafter"/>
</dbReference>
<dbReference type="GO" id="GO:0016594">
    <property type="term" value="F:glycine binding"/>
    <property type="evidence" value="ECO:0007669"/>
    <property type="project" value="TreeGrafter"/>
</dbReference>
<dbReference type="GO" id="GO:0004375">
    <property type="term" value="F:glycine dehydrogenase (decarboxylating) activity"/>
    <property type="evidence" value="ECO:0007669"/>
    <property type="project" value="UniProtKB-EC"/>
</dbReference>
<dbReference type="GO" id="GO:0030170">
    <property type="term" value="F:pyridoxal phosphate binding"/>
    <property type="evidence" value="ECO:0007669"/>
    <property type="project" value="TreeGrafter"/>
</dbReference>
<dbReference type="GO" id="GO:0019464">
    <property type="term" value="P:glycine decarboxylation via glycine cleavage system"/>
    <property type="evidence" value="ECO:0007669"/>
    <property type="project" value="UniProtKB-UniRule"/>
</dbReference>
<dbReference type="CDD" id="cd00613">
    <property type="entry name" value="GDC-P"/>
    <property type="match status" value="2"/>
</dbReference>
<dbReference type="FunFam" id="3.40.640.10:FF:000005">
    <property type="entry name" value="Glycine dehydrogenase (decarboxylating), mitochondrial"/>
    <property type="match status" value="1"/>
</dbReference>
<dbReference type="FunFam" id="3.90.1150.10:FF:000007">
    <property type="entry name" value="Glycine dehydrogenase (decarboxylating), mitochondrial"/>
    <property type="match status" value="1"/>
</dbReference>
<dbReference type="FunFam" id="3.40.640.10:FF:000007">
    <property type="entry name" value="glycine dehydrogenase (Decarboxylating), mitochondrial"/>
    <property type="match status" value="1"/>
</dbReference>
<dbReference type="Gene3D" id="3.90.1150.10">
    <property type="entry name" value="Aspartate Aminotransferase, domain 1"/>
    <property type="match status" value="2"/>
</dbReference>
<dbReference type="Gene3D" id="3.40.640.10">
    <property type="entry name" value="Type I PLP-dependent aspartate aminotransferase-like (Major domain)"/>
    <property type="match status" value="2"/>
</dbReference>
<dbReference type="HAMAP" id="MF_00711">
    <property type="entry name" value="GcvP"/>
    <property type="match status" value="1"/>
</dbReference>
<dbReference type="InterPro" id="IPR003437">
    <property type="entry name" value="GcvP"/>
</dbReference>
<dbReference type="InterPro" id="IPR049316">
    <property type="entry name" value="GDC-P_C"/>
</dbReference>
<dbReference type="InterPro" id="IPR049315">
    <property type="entry name" value="GDC-P_N"/>
</dbReference>
<dbReference type="InterPro" id="IPR020581">
    <property type="entry name" value="GDC_P"/>
</dbReference>
<dbReference type="InterPro" id="IPR015424">
    <property type="entry name" value="PyrdxlP-dep_Trfase"/>
</dbReference>
<dbReference type="InterPro" id="IPR015421">
    <property type="entry name" value="PyrdxlP-dep_Trfase_major"/>
</dbReference>
<dbReference type="InterPro" id="IPR015422">
    <property type="entry name" value="PyrdxlP-dep_Trfase_small"/>
</dbReference>
<dbReference type="NCBIfam" id="TIGR00461">
    <property type="entry name" value="gcvP"/>
    <property type="match status" value="1"/>
</dbReference>
<dbReference type="PANTHER" id="PTHR11773:SF1">
    <property type="entry name" value="GLYCINE DEHYDROGENASE (DECARBOXYLATING), MITOCHONDRIAL"/>
    <property type="match status" value="1"/>
</dbReference>
<dbReference type="PANTHER" id="PTHR11773">
    <property type="entry name" value="GLYCINE DEHYDROGENASE, DECARBOXYLATING"/>
    <property type="match status" value="1"/>
</dbReference>
<dbReference type="Pfam" id="PF21478">
    <property type="entry name" value="GcvP2_C"/>
    <property type="match status" value="1"/>
</dbReference>
<dbReference type="Pfam" id="PF02347">
    <property type="entry name" value="GDC-P"/>
    <property type="match status" value="2"/>
</dbReference>
<dbReference type="SUPFAM" id="SSF53383">
    <property type="entry name" value="PLP-dependent transferases"/>
    <property type="match status" value="2"/>
</dbReference>
<comment type="function">
    <text evidence="1">The glycine cleavage system catalyzes the degradation of glycine. The P protein binds the alpha-amino group of glycine through its pyridoxal phosphate cofactor; CO(2) is released and the remaining methylamine moiety is then transferred to the lipoamide cofactor of the H protein.</text>
</comment>
<comment type="catalytic activity">
    <reaction evidence="1">
        <text>N(6)-[(R)-lipoyl]-L-lysyl-[glycine-cleavage complex H protein] + glycine + H(+) = N(6)-[(R)-S(8)-aminomethyldihydrolipoyl]-L-lysyl-[glycine-cleavage complex H protein] + CO2</text>
        <dbReference type="Rhea" id="RHEA:24304"/>
        <dbReference type="Rhea" id="RHEA-COMP:10494"/>
        <dbReference type="Rhea" id="RHEA-COMP:10495"/>
        <dbReference type="ChEBI" id="CHEBI:15378"/>
        <dbReference type="ChEBI" id="CHEBI:16526"/>
        <dbReference type="ChEBI" id="CHEBI:57305"/>
        <dbReference type="ChEBI" id="CHEBI:83099"/>
        <dbReference type="ChEBI" id="CHEBI:83143"/>
        <dbReference type="EC" id="1.4.4.2"/>
    </reaction>
</comment>
<comment type="cofactor">
    <cofactor evidence="1">
        <name>pyridoxal 5'-phosphate</name>
        <dbReference type="ChEBI" id="CHEBI:597326"/>
    </cofactor>
</comment>
<comment type="subunit">
    <text evidence="1">The glycine cleavage system is composed of four proteins: P, T, L and H.</text>
</comment>
<comment type="similarity">
    <text evidence="1">Belongs to the GcvP family.</text>
</comment>
<feature type="chain" id="PRO_1000132449" description="Glycine dehydrogenase (decarboxylating)">
    <location>
        <begin position="1"/>
        <end position="954"/>
    </location>
</feature>
<feature type="modified residue" description="N6-(pyridoxal phosphate)lysine" evidence="1">
    <location>
        <position position="704"/>
    </location>
</feature>
<proteinExistence type="inferred from homology"/>
<sequence length="954" mass="103878">MTTPTEFQFTDYQPYDFANRRHIGPSPAEMTDMLKVIGYNSLDGLIDGTLPPAIRQKAPLVWGAPMTEREALDKLRETANKNKVLVSLIGQGYHGTITPPVIQRNILENPAWYTAYTPYQPEISQGRLEALLNYQTMVCDLTGLDVANASLLDEATAAAEGMAIAERVAKSKAKAFFVDADCHPQTIALIRTRAEPLGWQVIVGNPFTDLDPVDVFGAIFQYPGTHGHINDFTGLIARLHQAGAISIVAADILALTLLKSPGEMGADIAVGSSQRFGVPVGYGGPHAAYMAVKDAIKRSMPGRLVGVSVDARGNRAYRLSLQTREQHIRREKATSNICTAQVLLAVMASMYAVFHGPKGIKAIAQQVHQKAVLMAKGLEKLGYKVEPESFFDTITVDVGHMQGLILRAAVAEGVNLRKVGDTHIGMSLDERTRPATLEAVWRAFGGNFKIADFEPSYRLPKGLLRTSDYLTHPIFHMNRAESEMTRYIRRLSDRDLALDRSMIPLGSCTMKLNATAEMLPITWPEFSDIHPFVPADQALGYREMIDDLIEKLCAVTGYDAFSMQPNSGAQGEYAGLLTIRNFHIANGEGHRDVCLIPTSAHGTNPASAQMVGMKVVVVKVRENGDIDLDDFRAKAEEHAANLSCCMITYPSTHGVFEETVKEICDLVHANGGQVYLDGANMNAMVGLSRPGDIGSDVSHLNLHKTFCIPHGGGGPGMGPIGVKAHLAPHLPGHPETDGRPGAVSAAAFGSASILPISWSYCLMMGGEGLTQATKVAILNANYIATRLKGAYDVLYKSKTGRVAHECIIDTRPLVDSAGVTVDDVAKRLIDCGFHAPTMSWPVAGTLMIEPTESETKAELDRFCEAMLAIREEARAIEDGRMDKVNNPLKNAPHTVEDLVGEWDRPYSREQACFPPGAFRVDKYWSPVNRVDNVYGDRNLICTCPPVESYAEAAE</sequence>
<evidence type="ECO:0000255" key="1">
    <source>
        <dbReference type="HAMAP-Rule" id="MF_00711"/>
    </source>
</evidence>
<protein>
    <recommendedName>
        <fullName evidence="1">Glycine dehydrogenase (decarboxylating)</fullName>
        <ecNumber evidence="1">1.4.4.2</ecNumber>
    </recommendedName>
    <alternativeName>
        <fullName evidence="1">Glycine cleavage system P-protein</fullName>
    </alternativeName>
    <alternativeName>
        <fullName evidence="1">Glycine decarboxylase</fullName>
    </alternativeName>
    <alternativeName>
        <fullName evidence="1">Glycine dehydrogenase (aminomethyl-transferring)</fullName>
    </alternativeName>
</protein>
<name>GCSP_RHILW</name>
<organism>
    <name type="scientific">Rhizobium leguminosarum bv. trifolii (strain WSM2304)</name>
    <dbReference type="NCBI Taxonomy" id="395492"/>
    <lineage>
        <taxon>Bacteria</taxon>
        <taxon>Pseudomonadati</taxon>
        <taxon>Pseudomonadota</taxon>
        <taxon>Alphaproteobacteria</taxon>
        <taxon>Hyphomicrobiales</taxon>
        <taxon>Rhizobiaceae</taxon>
        <taxon>Rhizobium/Agrobacterium group</taxon>
        <taxon>Rhizobium</taxon>
    </lineage>
</organism>
<keyword id="KW-0560">Oxidoreductase</keyword>
<keyword id="KW-0663">Pyridoxal phosphate</keyword>
<keyword id="KW-1185">Reference proteome</keyword>
<reference key="1">
    <citation type="journal article" date="2010" name="Stand. Genomic Sci.">
        <title>Complete genome sequence of Rhizobium leguminosarum bv trifolii strain WSM2304, an effective microsymbiont of the South American clover Trifolium polymorphum.</title>
        <authorList>
            <person name="Reeve W."/>
            <person name="O'Hara G."/>
            <person name="Chain P."/>
            <person name="Ardley J."/>
            <person name="Brau L."/>
            <person name="Nandesena K."/>
            <person name="Tiwari R."/>
            <person name="Malfatti S."/>
            <person name="Kiss H."/>
            <person name="Lapidus A."/>
            <person name="Copeland A."/>
            <person name="Nolan M."/>
            <person name="Land M."/>
            <person name="Ivanova N."/>
            <person name="Mavromatis K."/>
            <person name="Markowitz V."/>
            <person name="Kyrpides N."/>
            <person name="Melino V."/>
            <person name="Denton M."/>
            <person name="Yates R."/>
            <person name="Howieson J."/>
        </authorList>
    </citation>
    <scope>NUCLEOTIDE SEQUENCE [LARGE SCALE GENOMIC DNA]</scope>
    <source>
        <strain>WSM2304</strain>
    </source>
</reference>